<evidence type="ECO:0000255" key="1">
    <source>
        <dbReference type="HAMAP-Rule" id="MF_00406"/>
    </source>
</evidence>
<evidence type="ECO:0000305" key="2"/>
<gene>
    <name evidence="1" type="primary">fabZ</name>
    <name type="ordered locus">Swol_1847</name>
</gene>
<organism>
    <name type="scientific">Syntrophomonas wolfei subsp. wolfei (strain DSM 2245B / Goettingen)</name>
    <dbReference type="NCBI Taxonomy" id="335541"/>
    <lineage>
        <taxon>Bacteria</taxon>
        <taxon>Bacillati</taxon>
        <taxon>Bacillota</taxon>
        <taxon>Clostridia</taxon>
        <taxon>Eubacteriales</taxon>
        <taxon>Syntrophomonadaceae</taxon>
        <taxon>Syntrophomonas</taxon>
    </lineage>
</organism>
<keyword id="KW-0963">Cytoplasm</keyword>
<keyword id="KW-0441">Lipid A biosynthesis</keyword>
<keyword id="KW-0444">Lipid biosynthesis</keyword>
<keyword id="KW-0443">Lipid metabolism</keyword>
<keyword id="KW-0456">Lyase</keyword>
<keyword id="KW-1185">Reference proteome</keyword>
<sequence>MKKLELNTEEIMKILPHRYPFLLVDRIIELLPGERAVGIKNLSVNEPFFPGHFPGHPVMPGVLMIEAMAQVGACAILCDEKYQGRLGYLAGVDRIRFKRMAVPGDSLLITTEFTAIKGNIGKGKGQIKINEEMVCGGEFLFALG</sequence>
<dbReference type="EC" id="4.2.1.59" evidence="1"/>
<dbReference type="EMBL" id="CP000448">
    <property type="protein sequence ID" value="ABI69145.1"/>
    <property type="status" value="ALT_INIT"/>
    <property type="molecule type" value="Genomic_DNA"/>
</dbReference>
<dbReference type="SMR" id="Q0AVV9"/>
<dbReference type="STRING" id="335541.Swol_1847"/>
<dbReference type="KEGG" id="swo:Swol_1847"/>
<dbReference type="eggNOG" id="COG0764">
    <property type="taxonomic scope" value="Bacteria"/>
</dbReference>
<dbReference type="HOGENOM" id="CLU_078912_3_0_9"/>
<dbReference type="Proteomes" id="UP000001968">
    <property type="component" value="Chromosome"/>
</dbReference>
<dbReference type="GO" id="GO:0005737">
    <property type="term" value="C:cytoplasm"/>
    <property type="evidence" value="ECO:0007669"/>
    <property type="project" value="UniProtKB-SubCell"/>
</dbReference>
<dbReference type="GO" id="GO:0016020">
    <property type="term" value="C:membrane"/>
    <property type="evidence" value="ECO:0007669"/>
    <property type="project" value="GOC"/>
</dbReference>
<dbReference type="GO" id="GO:0019171">
    <property type="term" value="F:(3R)-hydroxyacyl-[acyl-carrier-protein] dehydratase activity"/>
    <property type="evidence" value="ECO:0007669"/>
    <property type="project" value="UniProtKB-EC"/>
</dbReference>
<dbReference type="GO" id="GO:0006633">
    <property type="term" value="P:fatty acid biosynthetic process"/>
    <property type="evidence" value="ECO:0007669"/>
    <property type="project" value="UniProtKB-UniRule"/>
</dbReference>
<dbReference type="GO" id="GO:0009245">
    <property type="term" value="P:lipid A biosynthetic process"/>
    <property type="evidence" value="ECO:0007669"/>
    <property type="project" value="UniProtKB-UniRule"/>
</dbReference>
<dbReference type="CDD" id="cd01288">
    <property type="entry name" value="FabZ"/>
    <property type="match status" value="1"/>
</dbReference>
<dbReference type="FunFam" id="3.10.129.10:FF:000001">
    <property type="entry name" value="3-hydroxyacyl-[acyl-carrier-protein] dehydratase FabZ"/>
    <property type="match status" value="1"/>
</dbReference>
<dbReference type="Gene3D" id="3.10.129.10">
    <property type="entry name" value="Hotdog Thioesterase"/>
    <property type="match status" value="1"/>
</dbReference>
<dbReference type="HAMAP" id="MF_00406">
    <property type="entry name" value="FabZ"/>
    <property type="match status" value="1"/>
</dbReference>
<dbReference type="InterPro" id="IPR013114">
    <property type="entry name" value="FabA_FabZ"/>
</dbReference>
<dbReference type="InterPro" id="IPR010084">
    <property type="entry name" value="FabZ"/>
</dbReference>
<dbReference type="InterPro" id="IPR029069">
    <property type="entry name" value="HotDog_dom_sf"/>
</dbReference>
<dbReference type="NCBIfam" id="TIGR01750">
    <property type="entry name" value="fabZ"/>
    <property type="match status" value="1"/>
</dbReference>
<dbReference type="NCBIfam" id="NF000582">
    <property type="entry name" value="PRK00006.1"/>
    <property type="match status" value="1"/>
</dbReference>
<dbReference type="PANTHER" id="PTHR30272">
    <property type="entry name" value="3-HYDROXYACYL-[ACYL-CARRIER-PROTEIN] DEHYDRATASE"/>
    <property type="match status" value="1"/>
</dbReference>
<dbReference type="PANTHER" id="PTHR30272:SF1">
    <property type="entry name" value="3-HYDROXYACYL-[ACYL-CARRIER-PROTEIN] DEHYDRATASE"/>
    <property type="match status" value="1"/>
</dbReference>
<dbReference type="Pfam" id="PF07977">
    <property type="entry name" value="FabA"/>
    <property type="match status" value="1"/>
</dbReference>
<dbReference type="SUPFAM" id="SSF54637">
    <property type="entry name" value="Thioesterase/thiol ester dehydrase-isomerase"/>
    <property type="match status" value="1"/>
</dbReference>
<protein>
    <recommendedName>
        <fullName evidence="1">3-hydroxyacyl-[acyl-carrier-protein] dehydratase FabZ</fullName>
        <ecNumber evidence="1">4.2.1.59</ecNumber>
    </recommendedName>
    <alternativeName>
        <fullName evidence="1">(3R)-hydroxymyristoyl-[acyl-carrier-protein] dehydratase</fullName>
        <shortName evidence="1">(3R)-hydroxymyristoyl-ACP dehydrase</shortName>
    </alternativeName>
    <alternativeName>
        <fullName evidence="1">Beta-hydroxyacyl-ACP dehydratase</fullName>
    </alternativeName>
</protein>
<reference key="1">
    <citation type="journal article" date="2010" name="Environ. Microbiol.">
        <title>The genome of Syntrophomonas wolfei: new insights into syntrophic metabolism and biohydrogen production.</title>
        <authorList>
            <person name="Sieber J.R."/>
            <person name="Sims D.R."/>
            <person name="Han C."/>
            <person name="Kim E."/>
            <person name="Lykidis A."/>
            <person name="Lapidus A.L."/>
            <person name="McDonnald E."/>
            <person name="Rohlin L."/>
            <person name="Culley D.E."/>
            <person name="Gunsalus R."/>
            <person name="McInerney M.J."/>
        </authorList>
    </citation>
    <scope>NUCLEOTIDE SEQUENCE [LARGE SCALE GENOMIC DNA]</scope>
    <source>
        <strain>DSM 2245B / Goettingen</strain>
    </source>
</reference>
<comment type="function">
    <text evidence="1">Involved in unsaturated fatty acids biosynthesis. Catalyzes the dehydration of short chain beta-hydroxyacyl-ACPs and long chain saturated and unsaturated beta-hydroxyacyl-ACPs.</text>
</comment>
<comment type="catalytic activity">
    <reaction evidence="1">
        <text>a (3R)-hydroxyacyl-[ACP] = a (2E)-enoyl-[ACP] + H2O</text>
        <dbReference type="Rhea" id="RHEA:13097"/>
        <dbReference type="Rhea" id="RHEA-COMP:9925"/>
        <dbReference type="Rhea" id="RHEA-COMP:9945"/>
        <dbReference type="ChEBI" id="CHEBI:15377"/>
        <dbReference type="ChEBI" id="CHEBI:78784"/>
        <dbReference type="ChEBI" id="CHEBI:78827"/>
        <dbReference type="EC" id="4.2.1.59"/>
    </reaction>
</comment>
<comment type="subcellular location">
    <subcellularLocation>
        <location evidence="1">Cytoplasm</location>
    </subcellularLocation>
</comment>
<comment type="similarity">
    <text evidence="1">Belongs to the thioester dehydratase family. FabZ subfamily.</text>
</comment>
<comment type="sequence caution" evidence="2">
    <conflict type="erroneous initiation">
        <sequence resource="EMBL-CDS" id="ABI69145"/>
    </conflict>
</comment>
<accession>Q0AVV9</accession>
<feature type="chain" id="PRO_0000340813" description="3-hydroxyacyl-[acyl-carrier-protein] dehydratase FabZ">
    <location>
        <begin position="1"/>
        <end position="144"/>
    </location>
</feature>
<feature type="active site" evidence="1">
    <location>
        <position position="52"/>
    </location>
</feature>
<proteinExistence type="inferred from homology"/>
<name>FABZ_SYNWW</name>